<proteinExistence type="inferred from homology"/>
<feature type="chain" id="PRO_0000416195" description="7-carboxy-7-deazaguanine synthase">
    <location>
        <begin position="1"/>
        <end position="238"/>
    </location>
</feature>
<feature type="domain" description="Radical SAM core" evidence="2">
    <location>
        <begin position="20"/>
        <end position="234"/>
    </location>
</feature>
<feature type="binding site" evidence="1">
    <location>
        <begin position="14"/>
        <end position="16"/>
    </location>
    <ligand>
        <name>substrate</name>
    </ligand>
</feature>
<feature type="binding site" evidence="1">
    <location>
        <position position="29"/>
    </location>
    <ligand>
        <name>substrate</name>
    </ligand>
</feature>
<feature type="binding site" evidence="1">
    <location>
        <position position="33"/>
    </location>
    <ligand>
        <name>[4Fe-4S] cluster</name>
        <dbReference type="ChEBI" id="CHEBI:49883"/>
        <note>4Fe-4S-S-AdoMet</note>
    </ligand>
</feature>
<feature type="binding site" evidence="1">
    <location>
        <position position="37"/>
    </location>
    <ligand>
        <name>[4Fe-4S] cluster</name>
        <dbReference type="ChEBI" id="CHEBI:49883"/>
        <note>4Fe-4S-S-AdoMet</note>
    </ligand>
</feature>
<feature type="binding site" evidence="1">
    <location>
        <position position="40"/>
    </location>
    <ligand>
        <name>[4Fe-4S] cluster</name>
        <dbReference type="ChEBI" id="CHEBI:49883"/>
        <note>4Fe-4S-S-AdoMet</note>
    </ligand>
</feature>
<feature type="binding site" evidence="1">
    <location>
        <position position="42"/>
    </location>
    <ligand>
        <name>Mg(2+)</name>
        <dbReference type="ChEBI" id="CHEBI:18420"/>
    </ligand>
</feature>
<feature type="binding site" evidence="1">
    <location>
        <position position="80"/>
    </location>
    <ligand>
        <name>substrate</name>
    </ligand>
</feature>
<feature type="binding site" evidence="1">
    <location>
        <position position="82"/>
    </location>
    <ligand>
        <name>S-adenosyl-L-methionine</name>
        <dbReference type="ChEBI" id="CHEBI:59789"/>
    </ligand>
</feature>
<feature type="binding site" evidence="1">
    <location>
        <begin position="126"/>
        <end position="128"/>
    </location>
    <ligand>
        <name>S-adenosyl-L-methionine</name>
        <dbReference type="ChEBI" id="CHEBI:59789"/>
    </ligand>
</feature>
<dbReference type="EC" id="4.3.99.3" evidence="1"/>
<dbReference type="EMBL" id="AE016877">
    <property type="protein sequence ID" value="AAP08325.1"/>
    <property type="molecule type" value="Genomic_DNA"/>
</dbReference>
<dbReference type="RefSeq" id="NP_831124.1">
    <property type="nucleotide sequence ID" value="NC_004722.1"/>
</dbReference>
<dbReference type="RefSeq" id="WP_000036294.1">
    <property type="nucleotide sequence ID" value="NZ_CP138336.1"/>
</dbReference>
<dbReference type="SMR" id="Q81G67"/>
<dbReference type="STRING" id="226900.BC_1343"/>
<dbReference type="KEGG" id="bce:BC1343"/>
<dbReference type="PATRIC" id="fig|226900.8.peg.1319"/>
<dbReference type="HOGENOM" id="CLU_066739_2_3_9"/>
<dbReference type="OrthoDB" id="9792276at2"/>
<dbReference type="UniPathway" id="UPA00391"/>
<dbReference type="Proteomes" id="UP000001417">
    <property type="component" value="Chromosome"/>
</dbReference>
<dbReference type="GO" id="GO:0051539">
    <property type="term" value="F:4 iron, 4 sulfur cluster binding"/>
    <property type="evidence" value="ECO:0007669"/>
    <property type="project" value="UniProtKB-UniRule"/>
</dbReference>
<dbReference type="GO" id="GO:0016840">
    <property type="term" value="F:carbon-nitrogen lyase activity"/>
    <property type="evidence" value="ECO:0007669"/>
    <property type="project" value="UniProtKB-UniRule"/>
</dbReference>
<dbReference type="GO" id="GO:0000287">
    <property type="term" value="F:magnesium ion binding"/>
    <property type="evidence" value="ECO:0007669"/>
    <property type="project" value="UniProtKB-UniRule"/>
</dbReference>
<dbReference type="GO" id="GO:1904047">
    <property type="term" value="F:S-adenosyl-L-methionine binding"/>
    <property type="evidence" value="ECO:0007669"/>
    <property type="project" value="UniProtKB-UniRule"/>
</dbReference>
<dbReference type="GO" id="GO:0008616">
    <property type="term" value="P:queuosine biosynthetic process"/>
    <property type="evidence" value="ECO:0007669"/>
    <property type="project" value="UniProtKB-UniRule"/>
</dbReference>
<dbReference type="Gene3D" id="3.20.20.70">
    <property type="entry name" value="Aldolase class I"/>
    <property type="match status" value="1"/>
</dbReference>
<dbReference type="HAMAP" id="MF_00917">
    <property type="entry name" value="QueE"/>
    <property type="match status" value="1"/>
</dbReference>
<dbReference type="InterPro" id="IPR024924">
    <property type="entry name" value="7-CO-7-deazaguanine_synth-like"/>
</dbReference>
<dbReference type="InterPro" id="IPR013785">
    <property type="entry name" value="Aldolase_TIM"/>
</dbReference>
<dbReference type="InterPro" id="IPR017742">
    <property type="entry name" value="Deazaguanine_synth"/>
</dbReference>
<dbReference type="InterPro" id="IPR007197">
    <property type="entry name" value="rSAM"/>
</dbReference>
<dbReference type="NCBIfam" id="TIGR03365">
    <property type="entry name" value="Bsubt_queE"/>
    <property type="match status" value="1"/>
</dbReference>
<dbReference type="PANTHER" id="PTHR42836">
    <property type="entry name" value="7-CARBOXY-7-DEAZAGUANINE SYNTHASE"/>
    <property type="match status" value="1"/>
</dbReference>
<dbReference type="PANTHER" id="PTHR42836:SF1">
    <property type="entry name" value="7-CARBOXY-7-DEAZAGUANINE SYNTHASE"/>
    <property type="match status" value="1"/>
</dbReference>
<dbReference type="Pfam" id="PF13353">
    <property type="entry name" value="Fer4_12"/>
    <property type="match status" value="1"/>
</dbReference>
<dbReference type="Pfam" id="PF04055">
    <property type="entry name" value="Radical_SAM"/>
    <property type="match status" value="1"/>
</dbReference>
<dbReference type="PIRSF" id="PIRSF000370">
    <property type="entry name" value="QueE"/>
    <property type="match status" value="1"/>
</dbReference>
<dbReference type="SFLD" id="SFLDF00300">
    <property type="entry name" value="7-carboxy-7-deazaguanine_synth"/>
    <property type="match status" value="1"/>
</dbReference>
<dbReference type="SFLD" id="SFLDS00029">
    <property type="entry name" value="Radical_SAM"/>
    <property type="match status" value="1"/>
</dbReference>
<dbReference type="SUPFAM" id="SSF102114">
    <property type="entry name" value="Radical SAM enzymes"/>
    <property type="match status" value="1"/>
</dbReference>
<dbReference type="PROSITE" id="PS51918">
    <property type="entry name" value="RADICAL_SAM"/>
    <property type="match status" value="1"/>
</dbReference>
<organism>
    <name type="scientific">Bacillus cereus (strain ATCC 14579 / DSM 31 / CCUG 7414 / JCM 2152 / NBRC 15305 / NCIMB 9373 / NCTC 2599 / NRRL B-3711)</name>
    <dbReference type="NCBI Taxonomy" id="226900"/>
    <lineage>
        <taxon>Bacteria</taxon>
        <taxon>Bacillati</taxon>
        <taxon>Bacillota</taxon>
        <taxon>Bacilli</taxon>
        <taxon>Bacillales</taxon>
        <taxon>Bacillaceae</taxon>
        <taxon>Bacillus</taxon>
        <taxon>Bacillus cereus group</taxon>
    </lineage>
</organism>
<protein>
    <recommendedName>
        <fullName evidence="1">7-carboxy-7-deazaguanine synthase</fullName>
        <shortName evidence="1">CDG synthase</shortName>
        <ecNumber evidence="1">4.3.99.3</ecNumber>
    </recommendedName>
    <alternativeName>
        <fullName evidence="1">Queuosine biosynthesis protein QueE</fullName>
    </alternativeName>
</protein>
<keyword id="KW-0004">4Fe-4S</keyword>
<keyword id="KW-0408">Iron</keyword>
<keyword id="KW-0411">Iron-sulfur</keyword>
<keyword id="KW-0456">Lyase</keyword>
<keyword id="KW-0460">Magnesium</keyword>
<keyword id="KW-0479">Metal-binding</keyword>
<keyword id="KW-0671">Queuosine biosynthesis</keyword>
<keyword id="KW-1185">Reference proteome</keyword>
<keyword id="KW-0949">S-adenosyl-L-methionine</keyword>
<gene>
    <name evidence="1" type="primary">queE</name>
    <name type="ordered locus">BC_1343</name>
</gene>
<sequence>MSKIPVLEIFGPTIQGEGMVVGQKTMFIRTAGCDYSCAWCDSAFTWDGSAKDQIRQMTPEDIWDELVAIGGENFSHVTISGGNPALLKNIEFLLSILKENGMRTAIETQGSKWQDWLLQIDEITISPKPPSSTMKTDFQRLDAIIQKLAGKDISLKVVVFDDHDFEYAVKMHERYPKVPFFLQVGNDDTKTVDDAMLIKKLLDKYEWLIDKAVNCKEMNDAKVLPQLHALVWGNKRGV</sequence>
<evidence type="ECO:0000255" key="1">
    <source>
        <dbReference type="HAMAP-Rule" id="MF_00917"/>
    </source>
</evidence>
<evidence type="ECO:0000255" key="2">
    <source>
        <dbReference type="PROSITE-ProRule" id="PRU01266"/>
    </source>
</evidence>
<comment type="function">
    <text evidence="1">Catalyzes the complex heterocyclic radical-mediated conversion of 6-carboxy-5,6,7,8-tetrahydropterin (CPH4) to 7-carboxy-7-deazaguanine (CDG), a step common to the biosynthetic pathways of all 7-deazapurine-containing compounds.</text>
</comment>
<comment type="catalytic activity">
    <reaction evidence="1">
        <text>6-carboxy-5,6,7,8-tetrahydropterin + H(+) = 7-carboxy-7-deazaguanine + NH4(+)</text>
        <dbReference type="Rhea" id="RHEA:27974"/>
        <dbReference type="ChEBI" id="CHEBI:15378"/>
        <dbReference type="ChEBI" id="CHEBI:28938"/>
        <dbReference type="ChEBI" id="CHEBI:61032"/>
        <dbReference type="ChEBI" id="CHEBI:61036"/>
        <dbReference type="EC" id="4.3.99.3"/>
    </reaction>
</comment>
<comment type="cofactor">
    <cofactor evidence="1">
        <name>[4Fe-4S] cluster</name>
        <dbReference type="ChEBI" id="CHEBI:49883"/>
    </cofactor>
    <text evidence="1">Binds 1 [4Fe-4S] cluster. The cluster is coordinated with 3 cysteines and an exchangeable S-adenosyl-L-methionine.</text>
</comment>
<comment type="cofactor">
    <cofactor evidence="1">
        <name>S-adenosyl-L-methionine</name>
        <dbReference type="ChEBI" id="CHEBI:59789"/>
    </cofactor>
    <text evidence="1">Binds 1 S-adenosyl-L-methionine per subunit.</text>
</comment>
<comment type="cofactor">
    <cofactor evidence="1">
        <name>Mg(2+)</name>
        <dbReference type="ChEBI" id="CHEBI:18420"/>
    </cofactor>
</comment>
<comment type="pathway">
    <text evidence="1">Purine metabolism; 7-cyano-7-deazaguanine biosynthesis.</text>
</comment>
<comment type="subunit">
    <text evidence="1">Homodimer.</text>
</comment>
<comment type="similarity">
    <text evidence="1">Belongs to the radical SAM superfamily. 7-carboxy-7-deazaguanine synthase family.</text>
</comment>
<name>QUEE_BACCR</name>
<reference key="1">
    <citation type="journal article" date="2003" name="Nature">
        <title>Genome sequence of Bacillus cereus and comparative analysis with Bacillus anthracis.</title>
        <authorList>
            <person name="Ivanova N."/>
            <person name="Sorokin A."/>
            <person name="Anderson I."/>
            <person name="Galleron N."/>
            <person name="Candelon B."/>
            <person name="Kapatral V."/>
            <person name="Bhattacharyya A."/>
            <person name="Reznik G."/>
            <person name="Mikhailova N."/>
            <person name="Lapidus A."/>
            <person name="Chu L."/>
            <person name="Mazur M."/>
            <person name="Goltsman E."/>
            <person name="Larsen N."/>
            <person name="D'Souza M."/>
            <person name="Walunas T."/>
            <person name="Grechkin Y."/>
            <person name="Pusch G."/>
            <person name="Haselkorn R."/>
            <person name="Fonstein M."/>
            <person name="Ehrlich S.D."/>
            <person name="Overbeek R."/>
            <person name="Kyrpides N.C."/>
        </authorList>
    </citation>
    <scope>NUCLEOTIDE SEQUENCE [LARGE SCALE GENOMIC DNA]</scope>
    <source>
        <strain>ATCC 14579 / DSM 31 / CCUG 7414 / JCM 2152 / NBRC 15305 / NCIMB 9373 / NCTC 2599 / NRRL B-3711</strain>
    </source>
</reference>
<accession>Q81G67</accession>